<organism>
    <name type="scientific">Cananga odorata</name>
    <name type="common">Ylang-ylang tree</name>
    <name type="synonym">Uvaria odorata</name>
    <dbReference type="NCBI Taxonomy" id="13393"/>
    <lineage>
        <taxon>Eukaryota</taxon>
        <taxon>Viridiplantae</taxon>
        <taxon>Streptophyta</taxon>
        <taxon>Embryophyta</taxon>
        <taxon>Tracheophyta</taxon>
        <taxon>Spermatophyta</taxon>
        <taxon>Magnoliopsida</taxon>
        <taxon>Magnoliidae</taxon>
        <taxon>Magnoliales</taxon>
        <taxon>Annonaceae</taxon>
        <taxon>Ambavioideae</taxon>
        <taxon>Cananga</taxon>
    </lineage>
</organism>
<gene>
    <name evidence="4" type="primary">TPS1</name>
</gene>
<reference key="1">
    <citation type="journal article" date="2015" name="J. Exp. Bot.">
        <title>The floral transcriptome of ylang ylang (Cananga odorata var. fruticosa) uncovers biosynthetic pathways for volatile organic compounds and a multifunctional and novel sesquiterpene synthase.</title>
        <authorList>
            <person name="Jin J."/>
            <person name="Kim M.J."/>
            <person name="Dhandapani S."/>
            <person name="Tjhang J.G."/>
            <person name="Yin J.L."/>
            <person name="Wong L."/>
            <person name="Sarojam R."/>
            <person name="Chua N.H."/>
            <person name="Jang I.C."/>
        </authorList>
    </citation>
    <scope>NUCLEOTIDE SEQUENCE [MRNA]</scope>
    <scope>FUNCTION</scope>
    <scope>CATALYTIC ACTIVITY</scope>
    <scope>SUBCELLULAR LOCATION</scope>
    <scope>MOTIF</scope>
</reference>
<feature type="transit peptide" description="Chloroplast" evidence="2">
    <location>
        <begin position="1"/>
        <end position="42"/>
    </location>
</feature>
<feature type="chain" id="PRO_0000455178" description="Monoterepene synthase TPS1, chloropastic">
    <location>
        <begin position="43"/>
        <end position="590"/>
    </location>
</feature>
<feature type="short sequence motif" description="DDXXD motif" evidence="6">
    <location>
        <begin position="341"/>
        <end position="345"/>
    </location>
</feature>
<feature type="binding site" evidence="1">
    <location>
        <position position="304"/>
    </location>
    <ligand>
        <name>(2E)-geranyl diphosphate</name>
        <dbReference type="ChEBI" id="CHEBI:58057"/>
    </ligand>
</feature>
<feature type="binding site" evidence="1">
    <location>
        <position position="341"/>
    </location>
    <ligand>
        <name>(2E)-geranyl diphosphate</name>
        <dbReference type="ChEBI" id="CHEBI:58057"/>
    </ligand>
</feature>
<feature type="binding site" evidence="1">
    <location>
        <position position="341"/>
    </location>
    <ligand>
        <name>Mg(2+)</name>
        <dbReference type="ChEBI" id="CHEBI:18420"/>
        <label>1</label>
    </ligand>
</feature>
<feature type="binding site" evidence="1">
    <location>
        <position position="341"/>
    </location>
    <ligand>
        <name>Mg(2+)</name>
        <dbReference type="ChEBI" id="CHEBI:18420"/>
        <label>2</label>
    </ligand>
</feature>
<feature type="binding site" evidence="1">
    <location>
        <position position="345"/>
    </location>
    <ligand>
        <name>(2E)-geranyl diphosphate</name>
        <dbReference type="ChEBI" id="CHEBI:58057"/>
    </ligand>
</feature>
<feature type="binding site" evidence="1">
    <location>
        <position position="345"/>
    </location>
    <ligand>
        <name>Mg(2+)</name>
        <dbReference type="ChEBI" id="CHEBI:18420"/>
        <label>1</label>
    </ligand>
</feature>
<feature type="binding site" evidence="1">
    <location>
        <position position="345"/>
    </location>
    <ligand>
        <name>Mg(2+)</name>
        <dbReference type="ChEBI" id="CHEBI:18420"/>
        <label>2</label>
    </ligand>
</feature>
<feature type="binding site" evidence="1">
    <location>
        <position position="483"/>
    </location>
    <ligand>
        <name>(2E)-geranyl diphosphate</name>
        <dbReference type="ChEBI" id="CHEBI:58057"/>
    </ligand>
</feature>
<feature type="binding site" evidence="1">
    <location>
        <position position="486"/>
    </location>
    <ligand>
        <name>(2E)-geranyl diphosphate</name>
        <dbReference type="ChEBI" id="CHEBI:58057"/>
    </ligand>
</feature>
<feature type="binding site" evidence="1">
    <location>
        <position position="486"/>
    </location>
    <ligand>
        <name>Mg(2+)</name>
        <dbReference type="ChEBI" id="CHEBI:18420"/>
        <label>3</label>
    </ligand>
</feature>
<feature type="binding site" evidence="1">
    <location>
        <position position="490"/>
    </location>
    <ligand>
        <name>Mg(2+)</name>
        <dbReference type="ChEBI" id="CHEBI:18420"/>
        <label>3</label>
    </ligand>
</feature>
<feature type="binding site" evidence="1">
    <location>
        <position position="494"/>
    </location>
    <ligand>
        <name>Mg(2+)</name>
        <dbReference type="ChEBI" id="CHEBI:18420"/>
        <label>3</label>
    </ligand>
</feature>
<evidence type="ECO:0000250" key="1">
    <source>
        <dbReference type="UniProtKB" id="Q40577"/>
    </source>
</evidence>
<evidence type="ECO:0000255" key="2"/>
<evidence type="ECO:0000269" key="3">
    <source>
    </source>
</evidence>
<evidence type="ECO:0000303" key="4">
    <source>
    </source>
</evidence>
<evidence type="ECO:0000305" key="5"/>
<evidence type="ECO:0000305" key="6">
    <source>
    </source>
</evidence>
<protein>
    <recommendedName>
        <fullName evidence="5">Monoterepene synthase TPS1, chloropastic</fullName>
    </recommendedName>
    <alternativeName>
        <fullName evidence="5">Alpha-terpinene synthase TPS1</fullName>
        <ecNumber evidence="3">4.2.3.115</ecNumber>
    </alternativeName>
    <alternativeName>
        <fullName evidence="5">Beta-pinene synthase TPS1</fullName>
        <ecNumber evidence="3">4.2.3.-</ecNumber>
    </alternativeName>
    <alternativeName>
        <fullName evidence="5">Beta-thujene synthase TPS1</fullName>
        <ecNumber evidence="3">4.2.3.177</ecNumber>
    </alternativeName>
    <alternativeName>
        <fullName evidence="5">Sabinene synthase TPS1</fullName>
        <ecNumber evidence="3">4.2.3.-</ecNumber>
    </alternativeName>
    <alternativeName>
        <fullName evidence="4">Terpene synthase 1</fullName>
        <shortName evidence="4">CoTPS1</shortName>
    </alternativeName>
</protein>
<dbReference type="EC" id="4.2.3.115" evidence="3"/>
<dbReference type="EC" id="4.2.3.-" evidence="3"/>
<dbReference type="EC" id="4.2.3.177" evidence="3"/>
<dbReference type="EMBL" id="MN230105">
    <property type="protein sequence ID" value="QMW48842.1"/>
    <property type="molecule type" value="mRNA"/>
</dbReference>
<dbReference type="SMR" id="A0A7G5KLV0"/>
<dbReference type="UniPathway" id="UPA00213"/>
<dbReference type="GO" id="GO:0009507">
    <property type="term" value="C:chloroplast"/>
    <property type="evidence" value="ECO:0007669"/>
    <property type="project" value="UniProtKB-SubCell"/>
</dbReference>
<dbReference type="GO" id="GO:0000287">
    <property type="term" value="F:magnesium ion binding"/>
    <property type="evidence" value="ECO:0007669"/>
    <property type="project" value="InterPro"/>
</dbReference>
<dbReference type="GO" id="GO:0010333">
    <property type="term" value="F:terpene synthase activity"/>
    <property type="evidence" value="ECO:0007669"/>
    <property type="project" value="InterPro"/>
</dbReference>
<dbReference type="GO" id="GO:0016102">
    <property type="term" value="P:diterpenoid biosynthetic process"/>
    <property type="evidence" value="ECO:0007669"/>
    <property type="project" value="InterPro"/>
</dbReference>
<dbReference type="CDD" id="cd00684">
    <property type="entry name" value="Terpene_cyclase_plant_C1"/>
    <property type="match status" value="1"/>
</dbReference>
<dbReference type="FunFam" id="1.10.600.10:FF:000007">
    <property type="entry name" value="Isoprene synthase, chloroplastic"/>
    <property type="match status" value="1"/>
</dbReference>
<dbReference type="FunFam" id="1.50.10.130:FF:000001">
    <property type="entry name" value="Isoprene synthase, chloroplastic"/>
    <property type="match status" value="1"/>
</dbReference>
<dbReference type="Gene3D" id="1.10.600.10">
    <property type="entry name" value="Farnesyl Diphosphate Synthase"/>
    <property type="match status" value="1"/>
</dbReference>
<dbReference type="Gene3D" id="1.50.10.130">
    <property type="entry name" value="Terpene synthase, N-terminal domain"/>
    <property type="match status" value="1"/>
</dbReference>
<dbReference type="InterPro" id="IPR008949">
    <property type="entry name" value="Isoprenoid_synthase_dom_sf"/>
</dbReference>
<dbReference type="InterPro" id="IPR034741">
    <property type="entry name" value="Terpene_cyclase-like_1_C"/>
</dbReference>
<dbReference type="InterPro" id="IPR044814">
    <property type="entry name" value="Terpene_cyclase_plant_C1"/>
</dbReference>
<dbReference type="InterPro" id="IPR001906">
    <property type="entry name" value="Terpene_synth_N"/>
</dbReference>
<dbReference type="InterPro" id="IPR036965">
    <property type="entry name" value="Terpene_synth_N_sf"/>
</dbReference>
<dbReference type="InterPro" id="IPR050148">
    <property type="entry name" value="Terpene_synthase-like"/>
</dbReference>
<dbReference type="InterPro" id="IPR005630">
    <property type="entry name" value="Terpene_synthase_metal-bd"/>
</dbReference>
<dbReference type="InterPro" id="IPR008930">
    <property type="entry name" value="Terpenoid_cyclase/PrenylTrfase"/>
</dbReference>
<dbReference type="PANTHER" id="PTHR31225">
    <property type="entry name" value="OS04G0344100 PROTEIN-RELATED"/>
    <property type="match status" value="1"/>
</dbReference>
<dbReference type="PANTHER" id="PTHR31225:SF252">
    <property type="entry name" value="TERPENE SYNTHASE 12-RELATED"/>
    <property type="match status" value="1"/>
</dbReference>
<dbReference type="Pfam" id="PF01397">
    <property type="entry name" value="Terpene_synth"/>
    <property type="match status" value="1"/>
</dbReference>
<dbReference type="Pfam" id="PF03936">
    <property type="entry name" value="Terpene_synth_C"/>
    <property type="match status" value="1"/>
</dbReference>
<dbReference type="SFLD" id="SFLDS00005">
    <property type="entry name" value="Isoprenoid_Synthase_Type_I"/>
    <property type="match status" value="1"/>
</dbReference>
<dbReference type="SFLD" id="SFLDG01019">
    <property type="entry name" value="Terpene_Cyclase_Like_1_C_Termi"/>
    <property type="match status" value="1"/>
</dbReference>
<dbReference type="SUPFAM" id="SSF48239">
    <property type="entry name" value="Terpenoid cyclases/Protein prenyltransferases"/>
    <property type="match status" value="1"/>
</dbReference>
<dbReference type="SUPFAM" id="SSF48576">
    <property type="entry name" value="Terpenoid synthases"/>
    <property type="match status" value="1"/>
</dbReference>
<proteinExistence type="evidence at protein level"/>
<accession>A0A7G5KLV0</accession>
<sequence length="590" mass="67802">MALNTFLHFPPCSLSSFSCAVPKLPLAIFHKTMARQIRCPRASSQTSEPALARRSANFQPTIWTNDFIQSLNSDYSSDVYVQRIEKLKKSVRQSLEEADGPLAQLELIDDLQRLGVGRLFEREINEMLNGIYMDYKETQAQWNLHFTSMYFRLLRARGFDVSPEIFSRFMDETGNFQTSISNDPIGMLSLYEASYLCMPGETTLDEAQAFTCKHLKYWKEKDVHPTIALQIEHALELPIHWRMPRLDSRWYIKLYEEKEGTRPLLLELAKLDFNMVQSAHQTELRKVSRWWSEFGLAEKASFARDRLMEGYQWAIGTVFEPEFGQCREVLAKLAQLIAVIDDMYDVYGSPDELELFTDAVDRWNINTIEGLPDYMKLCFLSIYNTTNQGGYEFLKDHGVDIIPHLRKAWADYCKALRTEARWVNSKYTPTLDEYLNNAYTSASGPLILIHAFFFSGQEPWKEAIDCFVSSNKDIIRLSATIFRLTDDLETSAEEIERGDVPKSIQCYMHEAGASEAVSRAHIRGKISEVWRKMNKYLTAPATRHKTFNAAAFNLARTSTCVYLYGDGYGVPNGKNKENITSLTVEPIVLE</sequence>
<name>TPS1_CANOD</name>
<comment type="function">
    <text evidence="3">Monoterpene synthase involved in the biosynthesis of volatile organic compounds (PubMed:25956881). Mediates the conversion of (2E)-geranyl diphosphate (GPP) into beta-thujene, sabinene, beta-pinene and alpha-terpinene (PubMed:25956881). Does not use (2E,6E)-farnesyl diphosphate (FPP) as substrate (PubMed:25956881).</text>
</comment>
<comment type="catalytic activity">
    <reaction evidence="3">
        <text>(2E)-geranyl diphosphate = beta-thujene + diphosphate</text>
        <dbReference type="Rhea" id="RHEA:54072"/>
        <dbReference type="ChEBI" id="CHEBI:33019"/>
        <dbReference type="ChEBI" id="CHEBI:58057"/>
        <dbReference type="ChEBI" id="CHEBI:138047"/>
        <dbReference type="EC" id="4.2.3.177"/>
    </reaction>
    <physiologicalReaction direction="left-to-right" evidence="3">
        <dbReference type="Rhea" id="RHEA:54073"/>
    </physiologicalReaction>
</comment>
<comment type="catalytic activity">
    <reaction evidence="3">
        <text>(2E)-geranyl diphosphate = sabinene + diphosphate</text>
        <dbReference type="Rhea" id="RHEA:68636"/>
        <dbReference type="ChEBI" id="CHEBI:33019"/>
        <dbReference type="ChEBI" id="CHEBI:50027"/>
        <dbReference type="ChEBI" id="CHEBI:58057"/>
    </reaction>
    <physiologicalReaction direction="left-to-right" evidence="3">
        <dbReference type="Rhea" id="RHEA:68637"/>
    </physiologicalReaction>
</comment>
<comment type="catalytic activity">
    <reaction evidence="3">
        <text>(2E)-geranyl diphosphate = beta-pinene + diphosphate</text>
        <dbReference type="Rhea" id="RHEA:25666"/>
        <dbReference type="ChEBI" id="CHEBI:33019"/>
        <dbReference type="ChEBI" id="CHEBI:50025"/>
        <dbReference type="ChEBI" id="CHEBI:58057"/>
    </reaction>
    <physiologicalReaction direction="left-to-right" evidence="3">
        <dbReference type="Rhea" id="RHEA:25667"/>
    </physiologicalReaction>
</comment>
<comment type="catalytic activity">
    <reaction evidence="3">
        <text>(2E)-geranyl diphosphate = alpha-terpinene + diphosphate</text>
        <dbReference type="Rhea" id="RHEA:32563"/>
        <dbReference type="ChEBI" id="CHEBI:10334"/>
        <dbReference type="ChEBI" id="CHEBI:33019"/>
        <dbReference type="ChEBI" id="CHEBI:58057"/>
        <dbReference type="EC" id="4.2.3.115"/>
    </reaction>
    <physiologicalReaction direction="left-to-right" evidence="3">
        <dbReference type="Rhea" id="RHEA:32564"/>
    </physiologicalReaction>
</comment>
<comment type="cofactor">
    <cofactor evidence="1">
        <name>Mg(2+)</name>
        <dbReference type="ChEBI" id="CHEBI:18420"/>
    </cofactor>
    <text evidence="1">Binds 3 Mg(2+) ions per subunit.</text>
</comment>
<comment type="pathway">
    <text evidence="5">Secondary metabolite biosynthesis; terpenoid biosynthesis.</text>
</comment>
<comment type="subunit">
    <text evidence="1">Monomer.</text>
</comment>
<comment type="subcellular location">
    <subcellularLocation>
        <location evidence="3">Plastid</location>
        <location evidence="3">Chloroplast</location>
    </subcellularLocation>
</comment>
<comment type="domain">
    <text evidence="6">The Asp-Asp-Xaa-Xaa-Asp/Glu (DDXXD/E) motif is important for the catalytic activity, presumably through binding to Mg(2+).</text>
</comment>
<comment type="similarity">
    <text evidence="5">Belongs to the terpene synthase family. Tpsb subfamily.</text>
</comment>
<keyword id="KW-0150">Chloroplast</keyword>
<keyword id="KW-0456">Lyase</keyword>
<keyword id="KW-0460">Magnesium</keyword>
<keyword id="KW-0479">Metal-binding</keyword>
<keyword id="KW-0934">Plastid</keyword>
<keyword id="KW-0809">Transit peptide</keyword>